<organism>
    <name type="scientific">Homo sapiens</name>
    <name type="common">Human</name>
    <dbReference type="NCBI Taxonomy" id="9606"/>
    <lineage>
        <taxon>Eukaryota</taxon>
        <taxon>Metazoa</taxon>
        <taxon>Chordata</taxon>
        <taxon>Craniata</taxon>
        <taxon>Vertebrata</taxon>
        <taxon>Euteleostomi</taxon>
        <taxon>Mammalia</taxon>
        <taxon>Eutheria</taxon>
        <taxon>Euarchontoglires</taxon>
        <taxon>Primates</taxon>
        <taxon>Haplorrhini</taxon>
        <taxon>Catarrhini</taxon>
        <taxon>Hominidae</taxon>
        <taxon>Homo</taxon>
    </lineage>
</organism>
<accession>O95125</accession>
<accession>B0LPH9</accession>
<accession>Q4JG21</accession>
<accession>Q9H1B9</accession>
<accession>Q9NSM4</accession>
<reference key="1">
    <citation type="journal article" date="1998" name="Genomics">
        <title>Molecular cloning and characterization of ZNF202: a new gene at 11q23.3 encoding testis-specific zinc finger proteins.</title>
        <authorList>
            <person name="Monaco C."/>
            <person name="Helmer Citterich M."/>
            <person name="Caprini E."/>
            <person name="Vorechovsky I."/>
            <person name="Russo G."/>
            <person name="Croce C.M."/>
            <person name="Barbanti-Brodano G."/>
            <person name="Negrini M."/>
        </authorList>
    </citation>
    <scope>NUCLEOTIDE SEQUENCE [MRNA] (ISOFORMS ALPHA AND BETA)</scope>
    <scope>VARIANT ALA-154</scope>
    <source>
        <tissue>Testis</tissue>
    </source>
</reference>
<reference key="2">
    <citation type="submission" date="2000-07" db="EMBL/GenBank/DDBJ databases">
        <title>Genomic sequence analysis of the ZNF202 gene: relevance for lipid parameters.</title>
        <authorList>
            <person name="Langmann T."/>
            <person name="Porsch-Oezcueruemez M."/>
            <person name="Heimerl S."/>
            <person name="Andrikovics H."/>
            <person name="Schmitz G."/>
        </authorList>
    </citation>
    <scope>NUCLEOTIDE SEQUENCE [GENOMIC DNA]</scope>
    <scope>VARIANT ALA-154</scope>
</reference>
<reference key="3">
    <citation type="submission" date="2005-06" db="EMBL/GenBank/DDBJ databases">
        <authorList>
            <consortium name="SeattleSNPs variation discovery resource"/>
        </authorList>
    </citation>
    <scope>NUCLEOTIDE SEQUENCE [GENOMIC DNA]</scope>
    <scope>VARIANTS ALA-154 AND ALA-533</scope>
</reference>
<reference key="4">
    <citation type="submission" date="2007-12" db="EMBL/GenBank/DDBJ databases">
        <authorList>
            <consortium name="NHLBI resequencing and genotyping service (RS&amp;G)"/>
        </authorList>
    </citation>
    <scope>NUCLEOTIDE SEQUENCE [GENOMIC DNA]</scope>
    <scope>VARIANT ALA-154</scope>
</reference>
<reference key="5">
    <citation type="journal article" date="2004" name="Genome Res.">
        <title>The status, quality, and expansion of the NIH full-length cDNA project: the Mammalian Gene Collection (MGC).</title>
        <authorList>
            <consortium name="The MGC Project Team"/>
        </authorList>
    </citation>
    <scope>NUCLEOTIDE SEQUENCE [LARGE SCALE MRNA] (ISOFORM BETA)</scope>
    <scope>VARIANT ALA-154</scope>
    <source>
        <tissue>Brain</tissue>
    </source>
</reference>
<reference key="6">
    <citation type="journal article" date="2007" name="BMC Genomics">
        <title>The full-ORF clone resource of the German cDNA consortium.</title>
        <authorList>
            <person name="Bechtel S."/>
            <person name="Rosenfelder H."/>
            <person name="Duda A."/>
            <person name="Schmidt C.P."/>
            <person name="Ernst U."/>
            <person name="Wellenreuther R."/>
            <person name="Mehrle A."/>
            <person name="Schuster C."/>
            <person name="Bahr A."/>
            <person name="Bloecker H."/>
            <person name="Heubner D."/>
            <person name="Hoerlein A."/>
            <person name="Michel G."/>
            <person name="Wedler H."/>
            <person name="Koehrer K."/>
            <person name="Ottenwaelder B."/>
            <person name="Poustka A."/>
            <person name="Wiemann S."/>
            <person name="Schupp I."/>
        </authorList>
    </citation>
    <scope>NUCLEOTIDE SEQUENCE [LARGE SCALE MRNA] OF 15-648 (ISOFORM BETA)</scope>
    <source>
        <tissue>Mammary cancer</tissue>
    </source>
</reference>
<reference key="7">
    <citation type="journal article" date="2000" name="J. Biol. Chem.">
        <title>A broad role for the zinc finger protein ZNF202 in human lipid metabolism.</title>
        <authorList>
            <person name="Wagner S."/>
            <person name="Hess M.A."/>
            <person name="Ormonde-Hanson P."/>
            <person name="Malandro J."/>
            <person name="Hu H."/>
            <person name="Chen M."/>
            <person name="Kehrer R."/>
            <person name="Frodsham M."/>
            <person name="Schumacher C."/>
            <person name="Beluch M."/>
            <person name="Honer C."/>
            <person name="Skolnick M."/>
            <person name="Ballinger D."/>
            <person name="Bowen B.R."/>
        </authorList>
    </citation>
    <scope>CHARACTERIZATION</scope>
</reference>
<reference key="8">
    <citation type="journal article" date="2001" name="J. Biol. Chem.">
        <title>The zinc finger protein 202 (ZNF202) is a transcriptional repressor of ATP binding cassette transporter A1 (ABCA1) and ABCG1 gene expression and a modulator of cellular lipid efflux.</title>
        <authorList>
            <person name="Porsch-Oezcueruemez M."/>
            <person name="Langmann T."/>
            <person name="Heimerl S."/>
            <person name="Borsukova H."/>
            <person name="Kaminski W.E."/>
            <person name="Drobnik W."/>
            <person name="Honer C."/>
            <person name="Schumacher C."/>
            <person name="Schmitz G."/>
        </authorList>
    </citation>
    <scope>POSSIBLE FUNCTION</scope>
</reference>
<reference key="9">
    <citation type="journal article" date="2011" name="Sci. Signal.">
        <title>System-wide temporal characterization of the proteome and phosphoproteome of human embryonic stem cell differentiation.</title>
        <authorList>
            <person name="Rigbolt K.T."/>
            <person name="Prokhorova T.A."/>
            <person name="Akimov V."/>
            <person name="Henningsen J."/>
            <person name="Johansen P.T."/>
            <person name="Kratchmarova I."/>
            <person name="Kassem M."/>
            <person name="Mann M."/>
            <person name="Olsen J.V."/>
            <person name="Blagoev B."/>
        </authorList>
    </citation>
    <scope>PHOSPHORYLATION [LARGE SCALE ANALYSIS] AT SER-466</scope>
    <scope>IDENTIFICATION BY MASS SPECTROMETRY [LARGE SCALE ANALYSIS]</scope>
</reference>
<reference key="10">
    <citation type="journal article" date="2013" name="J. Proteome Res.">
        <title>Toward a comprehensive characterization of a human cancer cell phosphoproteome.</title>
        <authorList>
            <person name="Zhou H."/>
            <person name="Di Palma S."/>
            <person name="Preisinger C."/>
            <person name="Peng M."/>
            <person name="Polat A.N."/>
            <person name="Heck A.J."/>
            <person name="Mohammed S."/>
        </authorList>
    </citation>
    <scope>PHOSPHORYLATION [LARGE SCALE ANALYSIS] AT SER-466</scope>
    <scope>IDENTIFICATION BY MASS SPECTROMETRY [LARGE SCALE ANALYSIS]</scope>
    <source>
        <tissue>Cervix carcinoma</tissue>
        <tissue>Erythroleukemia</tissue>
    </source>
</reference>
<reference key="11">
    <citation type="journal article" date="2017" name="Nat. Struct. Mol. Biol.">
        <title>Site-specific mapping of the human SUMO proteome reveals co-modification with phosphorylation.</title>
        <authorList>
            <person name="Hendriks I.A."/>
            <person name="Lyon D."/>
            <person name="Young C."/>
            <person name="Jensen L.J."/>
            <person name="Vertegaal A.C."/>
            <person name="Nielsen M.L."/>
        </authorList>
    </citation>
    <scope>SUMOYLATION [LARGE SCALE ANALYSIS] AT LYS-22; LYS-454; LYS-460; LYS-507 AND LYS-521</scope>
    <scope>IDENTIFICATION BY MASS SPECTROMETRY [LARGE SCALE ANALYSIS]</scope>
</reference>
<evidence type="ECO:0000255" key="1">
    <source>
        <dbReference type="PROSITE-ProRule" id="PRU00042"/>
    </source>
</evidence>
<evidence type="ECO:0000255" key="2">
    <source>
        <dbReference type="PROSITE-ProRule" id="PRU00119"/>
    </source>
</evidence>
<evidence type="ECO:0000255" key="3">
    <source>
        <dbReference type="PROSITE-ProRule" id="PRU00187"/>
    </source>
</evidence>
<evidence type="ECO:0000256" key="4">
    <source>
        <dbReference type="SAM" id="MobiDB-lite"/>
    </source>
</evidence>
<evidence type="ECO:0000269" key="5">
    <source>
    </source>
</evidence>
<evidence type="ECO:0000269" key="6">
    <source>
    </source>
</evidence>
<evidence type="ECO:0000269" key="7">
    <source ref="2"/>
</evidence>
<evidence type="ECO:0000269" key="8">
    <source ref="3"/>
</evidence>
<evidence type="ECO:0000269" key="9">
    <source ref="4"/>
</evidence>
<evidence type="ECO:0000303" key="10">
    <source>
    </source>
</evidence>
<evidence type="ECO:0000305" key="11"/>
<evidence type="ECO:0007744" key="12">
    <source>
    </source>
</evidence>
<evidence type="ECO:0007744" key="13">
    <source>
    </source>
</evidence>
<evidence type="ECO:0007744" key="14">
    <source>
    </source>
</evidence>
<proteinExistence type="evidence at protein level"/>
<feature type="chain" id="PRO_0000047450" description="Zinc finger protein 202">
    <location>
        <begin position="1"/>
        <end position="648"/>
    </location>
</feature>
<feature type="domain" description="SCAN box" evidence="3">
    <location>
        <begin position="46"/>
        <end position="127"/>
    </location>
</feature>
<feature type="domain" description="KRAB" evidence="2">
    <location>
        <begin position="237"/>
        <end position="308"/>
    </location>
</feature>
<feature type="zinc finger region" description="C2H2-type 1" evidence="1">
    <location>
        <begin position="397"/>
        <end position="419"/>
    </location>
</feature>
<feature type="zinc finger region" description="C2H2-type 2" evidence="1">
    <location>
        <begin position="425"/>
        <end position="447"/>
    </location>
</feature>
<feature type="zinc finger region" description="C2H2-type 3" evidence="1">
    <location>
        <begin position="481"/>
        <end position="503"/>
    </location>
</feature>
<feature type="zinc finger region" description="C2H2-type 4" evidence="1">
    <location>
        <begin position="509"/>
        <end position="531"/>
    </location>
</feature>
<feature type="zinc finger region" description="C2H2-type 5" evidence="1">
    <location>
        <begin position="537"/>
        <end position="559"/>
    </location>
</feature>
<feature type="zinc finger region" description="C2H2-type 6" evidence="1">
    <location>
        <begin position="565"/>
        <end position="587"/>
    </location>
</feature>
<feature type="zinc finger region" description="C2H2-type 7" evidence="1">
    <location>
        <begin position="593"/>
        <end position="615"/>
    </location>
</feature>
<feature type="zinc finger region" description="C2H2-type 8" evidence="1">
    <location>
        <begin position="621"/>
        <end position="643"/>
    </location>
</feature>
<feature type="region of interest" description="Disordered" evidence="4">
    <location>
        <begin position="146"/>
        <end position="221"/>
    </location>
</feature>
<feature type="compositionally biased region" description="Polar residues" evidence="4">
    <location>
        <begin position="165"/>
        <end position="182"/>
    </location>
</feature>
<feature type="modified residue" description="Phosphoserine" evidence="12 13">
    <location>
        <position position="466"/>
    </location>
</feature>
<feature type="cross-link" description="Glycyl lysine isopeptide (Lys-Gly) (interchain with G-Cter in SUMO2)" evidence="14">
    <location>
        <position position="22"/>
    </location>
</feature>
<feature type="cross-link" description="Glycyl lysine isopeptide (Lys-Gly) (interchain with G-Cter in SUMO2)" evidence="14">
    <location>
        <position position="454"/>
    </location>
</feature>
<feature type="cross-link" description="Glycyl lysine isopeptide (Lys-Gly) (interchain with G-Cter in SUMO2)" evidence="14">
    <location>
        <position position="460"/>
    </location>
</feature>
<feature type="cross-link" description="Glycyl lysine isopeptide (Lys-Gly) (interchain with G-Cter in SUMO2)" evidence="14">
    <location>
        <position position="507"/>
    </location>
</feature>
<feature type="cross-link" description="Glycyl lysine isopeptide (Lys-Gly) (interchain with G-Cter in SUMO2)" evidence="14">
    <location>
        <position position="521"/>
    </location>
</feature>
<feature type="splice variant" id="VSP_006902" description="In isoform Alpha." evidence="10">
    <location>
        <begin position="1"/>
        <end position="224"/>
    </location>
</feature>
<feature type="sequence variant" id="VAR_007818" description="In dbSNP:rs1144507." evidence="5 6 7 8 9">
    <original>V</original>
    <variation>A</variation>
    <location>
        <position position="154"/>
    </location>
</feature>
<feature type="sequence variant" id="VAR_023975" description="In dbSNP:rs34111365." evidence="8">
    <original>G</original>
    <variation>A</variation>
    <location>
        <position position="533"/>
    </location>
</feature>
<feature type="sequence conflict" description="In Ref. 6; CAB82384." evidence="11" ref="6">
    <original>E</original>
    <variation>P</variation>
    <location>
        <position position="15"/>
    </location>
</feature>
<feature type="sequence conflict" description="In Ref. 2; CAC21447." evidence="11" ref="2">
    <location>
        <position position="205"/>
    </location>
</feature>
<feature type="sequence conflict" description="In Ref. 2." evidence="11" ref="2">
    <original>S</original>
    <variation>AA</variation>
    <location>
        <position position="278"/>
    </location>
</feature>
<gene>
    <name type="primary">ZNF202</name>
    <name type="synonym">ZKSCAN10</name>
</gene>
<name>ZN202_HUMAN</name>
<comment type="function">
    <text>Transcriptional repressor that binds to elements found predominantly in genes that participate in lipid metabolism. Among its targets are structural components of lipoprotein particles (apolipoproteins AIV, CIII, and E), enzymes involved in lipid processing (lipoprotein lipase, lecithin cholesteryl ester transferase), transporters involved in lipid homeostasis (ABCA1, ABCG1), and several genes involved in processes related to energy metabolism and vascular disease.</text>
</comment>
<comment type="subunit">
    <text>Interacts with SDP1.</text>
</comment>
<comment type="interaction">
    <interactant intactId="EBI-751960">
        <id>O95125</id>
    </interactant>
    <interactant intactId="EBI-3866279">
        <id>Q9BWT7</id>
        <label>CARD10</label>
    </interactant>
    <organismsDiffer>false</organismsDiffer>
    <experiments>3</experiments>
</comment>
<comment type="interaction">
    <interactant intactId="EBI-751960">
        <id>O95125</id>
    </interactant>
    <interactant intactId="EBI-739624">
        <id>Q8NHQ1</id>
        <label>CEP70</label>
    </interactant>
    <organismsDiffer>false</organismsDiffer>
    <experiments>3</experiments>
</comment>
<comment type="interaction">
    <interactant intactId="EBI-751960">
        <id>O95125</id>
    </interactant>
    <interactant intactId="EBI-769261">
        <id>Q96JC9</id>
        <label>EAF1</label>
    </interactant>
    <organismsDiffer>false</organismsDiffer>
    <experiments>3</experiments>
</comment>
<comment type="interaction">
    <interactant intactId="EBI-751960">
        <id>O95125</id>
    </interactant>
    <interactant intactId="EBI-10171697">
        <id>Q6A162</id>
        <label>KRT40</label>
    </interactant>
    <organismsDiffer>false</organismsDiffer>
    <experiments>6</experiments>
</comment>
<comment type="interaction">
    <interactant intactId="EBI-751960">
        <id>O95125</id>
    </interactant>
    <interactant intactId="EBI-2798728">
        <id>P61968</id>
        <label>LMO4</label>
    </interactant>
    <organismsDiffer>false</organismsDiffer>
    <experiments>4</experiments>
</comment>
<comment type="interaction">
    <interactant intactId="EBI-751960">
        <id>O95125</id>
    </interactant>
    <interactant intactId="EBI-712181">
        <id>Q15013</id>
        <label>MAD2L1BP</label>
    </interactant>
    <organismsDiffer>false</organismsDiffer>
    <experiments>3</experiments>
</comment>
<comment type="interaction">
    <interactant intactId="EBI-751960">
        <id>O95125</id>
    </interactant>
    <interactant intactId="EBI-307531">
        <id>P23508</id>
        <label>MCC</label>
    </interactant>
    <organismsDiffer>false</organismsDiffer>
    <experiments>3</experiments>
</comment>
<comment type="interaction">
    <interactant intactId="EBI-751960">
        <id>O95125</id>
    </interactant>
    <interactant intactId="EBI-16439278">
        <id>Q6FHY5</id>
        <label>MEOX2</label>
    </interactant>
    <organismsDiffer>false</organismsDiffer>
    <experiments>3</experiments>
</comment>
<comment type="interaction">
    <interactant intactId="EBI-751960">
        <id>O95125</id>
    </interactant>
    <interactant intactId="EBI-3923617">
        <id>Q9H2K0</id>
        <label>MTIF3</label>
    </interactant>
    <organismsDiffer>false</organismsDiffer>
    <experiments>3</experiments>
</comment>
<comment type="interaction">
    <interactant intactId="EBI-751960">
        <id>O95125</id>
    </interactant>
    <interactant intactId="EBI-747693">
        <id>P41227</id>
        <label>NAA10</label>
    </interactant>
    <organismsDiffer>false</organismsDiffer>
    <experiments>3</experiments>
</comment>
<comment type="interaction">
    <interactant intactId="EBI-751960">
        <id>O95125</id>
    </interactant>
    <interactant intactId="EBI-2585120">
        <id>Q9BSU3</id>
        <label>NAA11</label>
    </interactant>
    <organismsDiffer>false</organismsDiffer>
    <experiments>3</experiments>
</comment>
<comment type="interaction">
    <interactant intactId="EBI-751960">
        <id>O95125</id>
    </interactant>
    <interactant intactId="EBI-745846">
        <id>P57086</id>
        <label>SCAND1</label>
    </interactant>
    <organismsDiffer>false</organismsDiffer>
    <experiments>3</experiments>
</comment>
<comment type="interaction">
    <interactant intactId="EBI-751960">
        <id>O95125</id>
    </interactant>
    <interactant intactId="EBI-748391">
        <id>Q9BWG6</id>
        <label>SCNM1</label>
    </interactant>
    <organismsDiffer>false</organismsDiffer>
    <experiments>3</experiments>
</comment>
<comment type="interaction">
    <interactant intactId="EBI-751960">
        <id>O95125</id>
    </interactant>
    <interactant intactId="EBI-714091">
        <id>P49903</id>
        <label>SEPHS1</label>
    </interactant>
    <organismsDiffer>false</organismsDiffer>
    <experiments>5</experiments>
</comment>
<comment type="interaction">
    <interactant intactId="EBI-751960">
        <id>O95125</id>
    </interactant>
    <interactant intactId="EBI-2212028">
        <id>Q9Y2D8</id>
        <label>SSX2IP</label>
    </interactant>
    <organismsDiffer>false</organismsDiffer>
    <experiments>3</experiments>
</comment>
<comment type="interaction">
    <interactant intactId="EBI-751960">
        <id>O95125</id>
    </interactant>
    <interactant intactId="EBI-10177272">
        <id>P15622-3</id>
        <label>ZNF250</label>
    </interactant>
    <organismsDiffer>false</organismsDiffer>
    <experiments>3</experiments>
</comment>
<comment type="interaction">
    <interactant intactId="EBI-751960">
        <id>O95125</id>
    </interactant>
    <interactant intactId="EBI-11962468">
        <id>Q7Z4V0</id>
        <label>ZNF438</label>
    </interactant>
    <organismsDiffer>false</organismsDiffer>
    <experiments>3</experiments>
</comment>
<comment type="interaction">
    <interactant intactId="EBI-751960">
        <id>O95125</id>
    </interactant>
    <interactant intactId="EBI-5667516">
        <id>Q9Y2P0</id>
        <label>ZNF835</label>
    </interactant>
    <organismsDiffer>false</organismsDiffer>
    <experiments>3</experiments>
</comment>
<comment type="interaction">
    <interactant intactId="EBI-751960">
        <id>O95125</id>
    </interactant>
    <interactant intactId="EBI-11962574">
        <id>Q96EG3</id>
        <label>ZNF837</label>
    </interactant>
    <organismsDiffer>false</organismsDiffer>
    <experiments>3</experiments>
</comment>
<comment type="subcellular location">
    <subcellularLocation>
        <location>Nucleus</location>
    </subcellularLocation>
</comment>
<comment type="alternative products">
    <event type="alternative splicing"/>
    <isoform>
        <id>O95125-1</id>
        <name>Beta</name>
        <name>2</name>
        <sequence type="displayed"/>
    </isoform>
    <isoform>
        <id>O95125-2</id>
        <name>Alpha</name>
        <name>1</name>
        <sequence type="described" ref="VSP_006902"/>
    </isoform>
</comment>
<comment type="tissue specificity">
    <text>Highly expressed in testis. Also expressed in breast carcinoma cell lines.</text>
</comment>
<keyword id="KW-0025">Alternative splicing</keyword>
<keyword id="KW-0238">DNA-binding</keyword>
<keyword id="KW-1017">Isopeptide bond</keyword>
<keyword id="KW-0479">Metal-binding</keyword>
<keyword id="KW-0539">Nucleus</keyword>
<keyword id="KW-0597">Phosphoprotein</keyword>
<keyword id="KW-1267">Proteomics identification</keyword>
<keyword id="KW-1185">Reference proteome</keyword>
<keyword id="KW-0677">Repeat</keyword>
<keyword id="KW-0678">Repressor</keyword>
<keyword id="KW-0804">Transcription</keyword>
<keyword id="KW-0805">Transcription regulation</keyword>
<keyword id="KW-0832">Ubl conjugation</keyword>
<keyword id="KW-0862">Zinc</keyword>
<keyword id="KW-0863">Zinc-finger</keyword>
<protein>
    <recommendedName>
        <fullName>Zinc finger protein 202</fullName>
    </recommendedName>
    <alternativeName>
        <fullName>Zinc finger protein with KRAB and SCAN domains 10</fullName>
    </alternativeName>
</protein>
<sequence length="648" mass="74720">MATAVEPEDQDLWEEEGILMVKLEDDFTCRPESVLQRDDPVLETSHQNFRRFRYQEAASPREALIRLRELCHQWLRPERRTKEQILELLVLEQFLTVLPGELQSWVRGQRPESGEEAVTLVEGLQKQPRRPRRWVTVHVHGQEVLSEETVHLGVEPESPNELQDPVQSSTPEQSPEETTQSPDLGAPAEQRPHQEEELQTLQESEVPVPEDPDLPAERSSGDSEMVALLTALSQGLVTFKDVAVCFSQDQWSDLDPTQKEFYGEYVLEEDCGIVVSLSFPIPRPDEISQVREEEPWVPDIQEPQETQEPEILSFTYTGDRSKDEEECLEQEDLSLEDIHRPVLGEPEIHQTPDWEIVFEDNPGRLNERRFGTNISQVNSFVNLRETTPVHPLLGRHHDCSVCGKSFTCNSHLVRHLRTHTGEKPYKCMECGKSYTRSSHLARHQKVHKMNAPYKYPLNRKNLEETSPVTQAERTPSVEKPYRCDDCGKHFRWTSDLVRHQRTHTGEKPFFCTICGKSFSQKSVLTTHQRIHLGGKPYLCGECGEDFSEHRRYLAHRKTHAAEELYLCSECGRCFTHSAAFAKHLRGHASVRPCRCNECGKSFSRRDHLVRHQRTHTGEKPFTCPTCGKSFSRGYHLIRHQRTHSEKTS</sequence>
<dbReference type="EMBL" id="AF027219">
    <property type="protein sequence ID" value="AAC79941.1"/>
    <property type="molecule type" value="mRNA"/>
</dbReference>
<dbReference type="EMBL" id="AF027218">
    <property type="protein sequence ID" value="AAC79940.1"/>
    <property type="molecule type" value="mRNA"/>
</dbReference>
<dbReference type="EMBL" id="AJ276177">
    <property type="protein sequence ID" value="CAC21447.1"/>
    <property type="molecule type" value="Genomic_DNA"/>
</dbReference>
<dbReference type="EMBL" id="AJ276178">
    <property type="protein sequence ID" value="CAC21447.1"/>
    <property type="status" value="JOINED"/>
    <property type="molecule type" value="Genomic_DNA"/>
</dbReference>
<dbReference type="EMBL" id="AJ276179">
    <property type="protein sequence ID" value="CAC21447.1"/>
    <property type="status" value="JOINED"/>
    <property type="molecule type" value="Genomic_DNA"/>
</dbReference>
<dbReference type="EMBL" id="AJ276180">
    <property type="protein sequence ID" value="CAC21447.1"/>
    <property type="status" value="JOINED"/>
    <property type="molecule type" value="Genomic_DNA"/>
</dbReference>
<dbReference type="EMBL" id="AJ276181">
    <property type="protein sequence ID" value="CAC21447.1"/>
    <property type="status" value="JOINED"/>
    <property type="molecule type" value="Genomic_DNA"/>
</dbReference>
<dbReference type="EMBL" id="AJ276182">
    <property type="protein sequence ID" value="CAC21447.1"/>
    <property type="status" value="JOINED"/>
    <property type="molecule type" value="Genomic_DNA"/>
</dbReference>
<dbReference type="EMBL" id="DQ093962">
    <property type="protein sequence ID" value="AAY88738.1"/>
    <property type="molecule type" value="Genomic_DNA"/>
</dbReference>
<dbReference type="EMBL" id="EU332869">
    <property type="protein sequence ID" value="ABY87558.1"/>
    <property type="molecule type" value="Genomic_DNA"/>
</dbReference>
<dbReference type="EMBL" id="BC013382">
    <property type="protein sequence ID" value="AAH13382.1"/>
    <property type="molecule type" value="mRNA"/>
</dbReference>
<dbReference type="EMBL" id="AL162031">
    <property type="protein sequence ID" value="CAB82384.1"/>
    <property type="molecule type" value="mRNA"/>
</dbReference>
<dbReference type="CCDS" id="CCDS8443.1">
    <molecule id="O95125-1"/>
</dbReference>
<dbReference type="PIR" id="T47156">
    <property type="entry name" value="T47156"/>
</dbReference>
<dbReference type="RefSeq" id="NP_001288708.1">
    <molecule id="O95125-1"/>
    <property type="nucleotide sequence ID" value="NM_001301779.2"/>
</dbReference>
<dbReference type="RefSeq" id="NP_001288709.1">
    <molecule id="O95125-1"/>
    <property type="nucleotide sequence ID" value="NM_001301780.2"/>
</dbReference>
<dbReference type="RefSeq" id="NP_001288748.1">
    <molecule id="O95125-2"/>
    <property type="nucleotide sequence ID" value="NM_001301819.1"/>
</dbReference>
<dbReference type="RefSeq" id="NP_003446.2">
    <molecule id="O95125-1"/>
    <property type="nucleotide sequence ID" value="NM_003455.4"/>
</dbReference>
<dbReference type="RefSeq" id="XP_005271716.1">
    <molecule id="O95125-1"/>
    <property type="nucleotide sequence ID" value="XM_005271659.2"/>
</dbReference>
<dbReference type="RefSeq" id="XP_005271717.1">
    <molecule id="O95125-1"/>
    <property type="nucleotide sequence ID" value="XM_005271660.2"/>
</dbReference>
<dbReference type="RefSeq" id="XP_005271718.1">
    <molecule id="O95125-1"/>
    <property type="nucleotide sequence ID" value="XM_005271661.2"/>
</dbReference>
<dbReference type="RefSeq" id="XP_005271721.1">
    <property type="nucleotide sequence ID" value="XM_005271664.1"/>
</dbReference>
<dbReference type="RefSeq" id="XP_006718964.1">
    <molecule id="O95125-1"/>
    <property type="nucleotide sequence ID" value="XM_006718901.3"/>
</dbReference>
<dbReference type="RefSeq" id="XP_011541274.1">
    <molecule id="O95125-1"/>
    <property type="nucleotide sequence ID" value="XM_011542972.2"/>
</dbReference>
<dbReference type="RefSeq" id="XP_011541275.1">
    <molecule id="O95125-1"/>
    <property type="nucleotide sequence ID" value="XM_011542973.2"/>
</dbReference>
<dbReference type="RefSeq" id="XP_011541277.1">
    <molecule id="O95125-1"/>
    <property type="nucleotide sequence ID" value="XM_011542975.2"/>
</dbReference>
<dbReference type="RefSeq" id="XP_011541278.1">
    <property type="nucleotide sequence ID" value="XM_011542976.1"/>
</dbReference>
<dbReference type="RefSeq" id="XP_016873757.1">
    <molecule id="O95125-1"/>
    <property type="nucleotide sequence ID" value="XM_017018268.3"/>
</dbReference>
<dbReference type="RefSeq" id="XP_047283520.1">
    <molecule id="O95125-1"/>
    <property type="nucleotide sequence ID" value="XM_047427564.1"/>
</dbReference>
<dbReference type="SMR" id="O95125"/>
<dbReference type="BioGRID" id="113537">
    <property type="interactions" value="32"/>
</dbReference>
<dbReference type="FunCoup" id="O95125">
    <property type="interactions" value="1429"/>
</dbReference>
<dbReference type="IntAct" id="O95125">
    <property type="interactions" value="29"/>
</dbReference>
<dbReference type="STRING" id="9606.ENSP00000432504"/>
<dbReference type="iPTMnet" id="O95125"/>
<dbReference type="PhosphoSitePlus" id="O95125"/>
<dbReference type="BioMuta" id="ZNF202"/>
<dbReference type="jPOST" id="O95125"/>
<dbReference type="MassIVE" id="O95125"/>
<dbReference type="PaxDb" id="9606-ENSP00000337724"/>
<dbReference type="PeptideAtlas" id="O95125"/>
<dbReference type="ProteomicsDB" id="50655">
    <molecule id="O95125-1"/>
</dbReference>
<dbReference type="ProteomicsDB" id="50656">
    <molecule id="O95125-2"/>
</dbReference>
<dbReference type="Antibodypedia" id="32833">
    <property type="antibodies" value="167 antibodies from 19 providers"/>
</dbReference>
<dbReference type="DNASU" id="7753"/>
<dbReference type="Ensembl" id="ENST00000336139.8">
    <molecule id="O95125-1"/>
    <property type="protein sequence ID" value="ENSP00000337724.4"/>
    <property type="gene ID" value="ENSG00000166261.11"/>
</dbReference>
<dbReference type="Ensembl" id="ENST00000529691.1">
    <molecule id="O95125-1"/>
    <property type="protein sequence ID" value="ENSP00000433881.1"/>
    <property type="gene ID" value="ENSG00000166261.11"/>
</dbReference>
<dbReference type="Ensembl" id="ENST00000530393.6">
    <molecule id="O95125-1"/>
    <property type="protein sequence ID" value="ENSP00000432504.1"/>
    <property type="gene ID" value="ENSG00000166261.11"/>
</dbReference>
<dbReference type="GeneID" id="7753"/>
<dbReference type="KEGG" id="hsa:7753"/>
<dbReference type="MANE-Select" id="ENST00000530393.6">
    <property type="protein sequence ID" value="ENSP00000432504.1"/>
    <property type="RefSeq nucleotide sequence ID" value="NM_003455.4"/>
    <property type="RefSeq protein sequence ID" value="NP_003446.2"/>
</dbReference>
<dbReference type="UCSC" id="uc001pzd.2">
    <molecule id="O95125-1"/>
    <property type="organism name" value="human"/>
</dbReference>
<dbReference type="AGR" id="HGNC:12994"/>
<dbReference type="CTD" id="7753"/>
<dbReference type="DisGeNET" id="7753"/>
<dbReference type="GeneCards" id="ZNF202"/>
<dbReference type="HGNC" id="HGNC:12994">
    <property type="gene designation" value="ZNF202"/>
</dbReference>
<dbReference type="HPA" id="ENSG00000166261">
    <property type="expression patterns" value="Low tissue specificity"/>
</dbReference>
<dbReference type="MIM" id="603430">
    <property type="type" value="gene"/>
</dbReference>
<dbReference type="neXtProt" id="NX_O95125"/>
<dbReference type="OpenTargets" id="ENSG00000166261"/>
<dbReference type="PharmGKB" id="PA37574"/>
<dbReference type="VEuPathDB" id="HostDB:ENSG00000166261"/>
<dbReference type="eggNOG" id="KOG1721">
    <property type="taxonomic scope" value="Eukaryota"/>
</dbReference>
<dbReference type="GeneTree" id="ENSGT00940000161189"/>
<dbReference type="HOGENOM" id="CLU_002678_49_8_1"/>
<dbReference type="InParanoid" id="O95125"/>
<dbReference type="OMA" id="ELYLCNE"/>
<dbReference type="OrthoDB" id="6077919at2759"/>
<dbReference type="PAN-GO" id="O95125">
    <property type="GO annotations" value="3 GO annotations based on evolutionary models"/>
</dbReference>
<dbReference type="PhylomeDB" id="O95125"/>
<dbReference type="TreeFam" id="TF350829"/>
<dbReference type="PathwayCommons" id="O95125"/>
<dbReference type="Reactome" id="R-HSA-212436">
    <property type="pathway name" value="Generic Transcription Pathway"/>
</dbReference>
<dbReference type="SignaLink" id="O95125"/>
<dbReference type="SIGNOR" id="O95125"/>
<dbReference type="BioGRID-ORCS" id="7753">
    <property type="hits" value="24 hits in 1180 CRISPR screens"/>
</dbReference>
<dbReference type="ChiTaRS" id="ZNF202">
    <property type="organism name" value="human"/>
</dbReference>
<dbReference type="GeneWiki" id="ZNF202"/>
<dbReference type="GenomeRNAi" id="7753"/>
<dbReference type="Pharos" id="O95125">
    <property type="development level" value="Tbio"/>
</dbReference>
<dbReference type="PRO" id="PR:O95125"/>
<dbReference type="Proteomes" id="UP000005640">
    <property type="component" value="Chromosome 11"/>
</dbReference>
<dbReference type="RNAct" id="O95125">
    <property type="molecule type" value="protein"/>
</dbReference>
<dbReference type="Bgee" id="ENSG00000166261">
    <property type="expression patterns" value="Expressed in secondary oocyte and 136 other cell types or tissues"/>
</dbReference>
<dbReference type="ExpressionAtlas" id="O95125">
    <property type="expression patterns" value="baseline and differential"/>
</dbReference>
<dbReference type="GO" id="GO:0005694">
    <property type="term" value="C:chromosome"/>
    <property type="evidence" value="ECO:0000314"/>
    <property type="project" value="HPA"/>
</dbReference>
<dbReference type="GO" id="GO:0016604">
    <property type="term" value="C:nuclear body"/>
    <property type="evidence" value="ECO:0000314"/>
    <property type="project" value="HPA"/>
</dbReference>
<dbReference type="GO" id="GO:0005730">
    <property type="term" value="C:nucleolus"/>
    <property type="evidence" value="ECO:0000314"/>
    <property type="project" value="HPA"/>
</dbReference>
<dbReference type="GO" id="GO:0000981">
    <property type="term" value="F:DNA-binding transcription factor activity, RNA polymerase II-specific"/>
    <property type="evidence" value="ECO:0000318"/>
    <property type="project" value="GO_Central"/>
</dbReference>
<dbReference type="GO" id="GO:0001227">
    <property type="term" value="F:DNA-binding transcription repressor activity, RNA polymerase II-specific"/>
    <property type="evidence" value="ECO:0000314"/>
    <property type="project" value="NTNU_SB"/>
</dbReference>
<dbReference type="GO" id="GO:0000978">
    <property type="term" value="F:RNA polymerase II cis-regulatory region sequence-specific DNA binding"/>
    <property type="evidence" value="ECO:0000314"/>
    <property type="project" value="NTNU_SB"/>
</dbReference>
<dbReference type="GO" id="GO:0008270">
    <property type="term" value="F:zinc ion binding"/>
    <property type="evidence" value="ECO:0007669"/>
    <property type="project" value="UniProtKB-KW"/>
</dbReference>
<dbReference type="GO" id="GO:0006629">
    <property type="term" value="P:lipid metabolic process"/>
    <property type="evidence" value="ECO:0000304"/>
    <property type="project" value="ProtInc"/>
</dbReference>
<dbReference type="GO" id="GO:0000122">
    <property type="term" value="P:negative regulation of transcription by RNA polymerase II"/>
    <property type="evidence" value="ECO:0000314"/>
    <property type="project" value="NTNU_SB"/>
</dbReference>
<dbReference type="GO" id="GO:0006357">
    <property type="term" value="P:regulation of transcription by RNA polymerase II"/>
    <property type="evidence" value="ECO:0000318"/>
    <property type="project" value="GO_Central"/>
</dbReference>
<dbReference type="CDD" id="cd07765">
    <property type="entry name" value="KRAB_A-box"/>
    <property type="match status" value="1"/>
</dbReference>
<dbReference type="CDD" id="cd07936">
    <property type="entry name" value="SCAN"/>
    <property type="match status" value="1"/>
</dbReference>
<dbReference type="FunFam" id="3.30.160.60:FF:001215">
    <property type="entry name" value="Zinc finger 202 m1"/>
    <property type="match status" value="1"/>
</dbReference>
<dbReference type="FunFam" id="3.30.160.60:FF:001519">
    <property type="entry name" value="Zinc finger 202 m1"/>
    <property type="match status" value="1"/>
</dbReference>
<dbReference type="FunFam" id="3.30.160.60:FF:001538">
    <property type="entry name" value="Zinc finger 202 m1"/>
    <property type="match status" value="1"/>
</dbReference>
<dbReference type="FunFam" id="3.30.160.60:FF:001554">
    <property type="entry name" value="Zinc finger 202 m1"/>
    <property type="match status" value="1"/>
</dbReference>
<dbReference type="FunFam" id="3.30.160.60:FF:000557">
    <property type="entry name" value="zinc finger and SCAN domain-containing protein 29"/>
    <property type="match status" value="1"/>
</dbReference>
<dbReference type="FunFam" id="3.30.160.60:FF:001139">
    <property type="entry name" value="zinc finger protein 202 isoform X1"/>
    <property type="match status" value="1"/>
</dbReference>
<dbReference type="FunFam" id="3.30.160.60:FF:000358">
    <property type="entry name" value="zinc finger protein 24"/>
    <property type="match status" value="1"/>
</dbReference>
<dbReference type="FunFam" id="1.10.4020.10:FF:000001">
    <property type="entry name" value="zinc finger protein 263 isoform X1"/>
    <property type="match status" value="1"/>
</dbReference>
<dbReference type="Gene3D" id="6.10.140.140">
    <property type="match status" value="1"/>
</dbReference>
<dbReference type="Gene3D" id="3.30.160.60">
    <property type="entry name" value="Classic Zinc Finger"/>
    <property type="match status" value="8"/>
</dbReference>
<dbReference type="Gene3D" id="1.10.4020.10">
    <property type="entry name" value="DNA breaking-rejoining enzymes"/>
    <property type="match status" value="1"/>
</dbReference>
<dbReference type="InterPro" id="IPR001909">
    <property type="entry name" value="KRAB"/>
</dbReference>
<dbReference type="InterPro" id="IPR036051">
    <property type="entry name" value="KRAB_dom_sf"/>
</dbReference>
<dbReference type="InterPro" id="IPR003309">
    <property type="entry name" value="SCAN_dom"/>
</dbReference>
<dbReference type="InterPro" id="IPR038269">
    <property type="entry name" value="SCAN_sf"/>
</dbReference>
<dbReference type="InterPro" id="IPR036236">
    <property type="entry name" value="Znf_C2H2_sf"/>
</dbReference>
<dbReference type="InterPro" id="IPR013087">
    <property type="entry name" value="Znf_C2H2_type"/>
</dbReference>
<dbReference type="PANTHER" id="PTHR23226">
    <property type="entry name" value="ZINC FINGER AND SCAN DOMAIN-CONTAINING"/>
    <property type="match status" value="1"/>
</dbReference>
<dbReference type="PANTHER" id="PTHR23226:SF150">
    <property type="entry name" value="ZINC FINGER PROTEIN 444"/>
    <property type="match status" value="1"/>
</dbReference>
<dbReference type="Pfam" id="PF01352">
    <property type="entry name" value="KRAB"/>
    <property type="match status" value="1"/>
</dbReference>
<dbReference type="Pfam" id="PF02023">
    <property type="entry name" value="SCAN"/>
    <property type="match status" value="1"/>
</dbReference>
<dbReference type="Pfam" id="PF00096">
    <property type="entry name" value="zf-C2H2"/>
    <property type="match status" value="7"/>
</dbReference>
<dbReference type="SMART" id="SM00349">
    <property type="entry name" value="KRAB"/>
    <property type="match status" value="1"/>
</dbReference>
<dbReference type="SMART" id="SM00431">
    <property type="entry name" value="SCAN"/>
    <property type="match status" value="1"/>
</dbReference>
<dbReference type="SMART" id="SM00355">
    <property type="entry name" value="ZnF_C2H2"/>
    <property type="match status" value="8"/>
</dbReference>
<dbReference type="SUPFAM" id="SSF57667">
    <property type="entry name" value="beta-beta-alpha zinc fingers"/>
    <property type="match status" value="4"/>
</dbReference>
<dbReference type="SUPFAM" id="SSF109640">
    <property type="entry name" value="KRAB domain (Kruppel-associated box)"/>
    <property type="match status" value="1"/>
</dbReference>
<dbReference type="SUPFAM" id="SSF47353">
    <property type="entry name" value="Retrovirus capsid dimerization domain-like"/>
    <property type="match status" value="1"/>
</dbReference>
<dbReference type="PROSITE" id="PS50805">
    <property type="entry name" value="KRAB"/>
    <property type="match status" value="1"/>
</dbReference>
<dbReference type="PROSITE" id="PS50804">
    <property type="entry name" value="SCAN_BOX"/>
    <property type="match status" value="1"/>
</dbReference>
<dbReference type="PROSITE" id="PS00028">
    <property type="entry name" value="ZINC_FINGER_C2H2_1"/>
    <property type="match status" value="8"/>
</dbReference>
<dbReference type="PROSITE" id="PS50157">
    <property type="entry name" value="ZINC_FINGER_C2H2_2"/>
    <property type="match status" value="8"/>
</dbReference>